<keyword id="KW-0002">3D-structure</keyword>
<keyword id="KW-0007">Acetylation</keyword>
<keyword id="KW-0903">Direct protein sequencing</keyword>
<keyword id="KW-0496">Mitochondrion</keyword>
<keyword id="KW-1185">Reference proteome</keyword>
<keyword id="KW-0687">Ribonucleoprotein</keyword>
<keyword id="KW-0689">Ribosomal protein</keyword>
<evidence type="ECO:0000250" key="1">
    <source>
        <dbReference type="UniProtKB" id="Q8VE22"/>
    </source>
</evidence>
<evidence type="ECO:0000250" key="2">
    <source>
        <dbReference type="UniProtKB" id="Q9Y3D9"/>
    </source>
</evidence>
<evidence type="ECO:0000256" key="3">
    <source>
        <dbReference type="SAM" id="MobiDB-lite"/>
    </source>
</evidence>
<evidence type="ECO:0000269" key="4">
    <source>
    </source>
</evidence>
<evidence type="ECO:0000269" key="5">
    <source>
    </source>
</evidence>
<evidence type="ECO:0000305" key="6"/>
<evidence type="ECO:0000312" key="7">
    <source>
        <dbReference type="EMBL" id="AAI11165.1"/>
    </source>
</evidence>
<evidence type="ECO:0007744" key="8">
    <source>
        <dbReference type="PDB" id="3JD5"/>
    </source>
</evidence>
<evidence type="ECO:0007829" key="9">
    <source>
        <dbReference type="PDB" id="6NEQ"/>
    </source>
</evidence>
<proteinExistence type="evidence at protein level"/>
<feature type="initiator methionine" description="Removed" evidence="2">
    <location>
        <position position="1"/>
    </location>
</feature>
<feature type="chain" id="PRO_0000278129" description="Small ribosomal subunit protein mS23">
    <location>
        <begin position="2"/>
        <end position="190"/>
    </location>
</feature>
<feature type="region of interest" description="Disordered" evidence="3">
    <location>
        <begin position="137"/>
        <end position="190"/>
    </location>
</feature>
<feature type="modified residue" description="N-acetylalanine" evidence="2">
    <location>
        <position position="2"/>
    </location>
</feature>
<feature type="modified residue" description="N6-succinyllysine" evidence="1">
    <location>
        <position position="83"/>
    </location>
</feature>
<feature type="modified residue" description="N6-acetyllysine" evidence="2">
    <location>
        <position position="102"/>
    </location>
</feature>
<feature type="sequence conflict" description="In Ref. 2; AA sequence." evidence="6" ref="2">
    <original>IL</original>
    <variation>LI</variation>
    <location>
        <begin position="131"/>
        <end position="132"/>
    </location>
</feature>
<feature type="strand" evidence="9">
    <location>
        <begin position="7"/>
        <end position="9"/>
    </location>
</feature>
<feature type="helix" evidence="9">
    <location>
        <begin position="12"/>
        <end position="21"/>
    </location>
</feature>
<feature type="helix" evidence="9">
    <location>
        <begin position="31"/>
        <end position="37"/>
    </location>
</feature>
<feature type="helix" evidence="9">
    <location>
        <begin position="67"/>
        <end position="78"/>
    </location>
</feature>
<feature type="helix" evidence="9">
    <location>
        <begin position="95"/>
        <end position="109"/>
    </location>
</feature>
<feature type="helix" evidence="9">
    <location>
        <begin position="114"/>
        <end position="126"/>
    </location>
</feature>
<reference evidence="7" key="1">
    <citation type="submission" date="2005-12" db="EMBL/GenBank/DDBJ databases">
        <authorList>
            <consortium name="NIH - Mammalian Gene Collection (MGC) project"/>
        </authorList>
    </citation>
    <scope>NUCLEOTIDE SEQUENCE [LARGE SCALE MRNA]</scope>
    <source>
        <strain evidence="7">Crossbred X Angus</strain>
        <tissue evidence="7">Liver</tissue>
    </source>
</reference>
<reference evidence="6" key="2">
    <citation type="journal article" date="2000" name="J. Biol. Chem.">
        <title>A proteomics approach to the identification of mammalian mitochondrial small subunit ribosomal proteins.</title>
        <authorList>
            <person name="Koc E.C."/>
            <person name="Burkhart W."/>
            <person name="Blackburn K."/>
            <person name="Moseley A."/>
            <person name="Koc H."/>
            <person name="Spremulli L.L."/>
        </authorList>
    </citation>
    <scope>PROTEIN SEQUENCE OF 84-93 AND 124-133</scope>
    <scope>SUBUNIT</scope>
    <scope>SUBCELLULAR LOCATION</scope>
    <source>
        <tissue evidence="4">Liver</tissue>
    </source>
</reference>
<reference evidence="8" key="3">
    <citation type="journal article" date="2014" name="Proc. Natl. Acad. Sci. U.S.A.">
        <title>Cryo-EM structure of the small subunit of the mammalian mitochondrial ribosome.</title>
        <authorList>
            <person name="Kaushal P.S."/>
            <person name="Sharma M.R."/>
            <person name="Booth T.M."/>
            <person name="Haque E.M."/>
            <person name="Tung C.S."/>
            <person name="Sanbonmatsu K.Y."/>
            <person name="Spremulli L.L."/>
            <person name="Agrawal R.K."/>
        </authorList>
    </citation>
    <scope>STRUCTURE BY ELECTRON MICROSCOPY (7.00 ANGSTROMS)</scope>
    <scope>SUBCELLULAR LOCATION</scope>
    <scope>SUBUNIT</scope>
</reference>
<protein>
    <recommendedName>
        <fullName evidence="6">Small ribosomal subunit protein mS23</fullName>
    </recommendedName>
    <alternativeName>
        <fullName>28S ribosomal protein S23, mitochondrial</fullName>
        <shortName>MRP-S23</shortName>
        <shortName>S23mt</shortName>
    </alternativeName>
</protein>
<dbReference type="EMBL" id="BC111164">
    <property type="protein sequence ID" value="AAI11165.1"/>
    <property type="molecule type" value="mRNA"/>
</dbReference>
<dbReference type="RefSeq" id="NP_001039657.1">
    <property type="nucleotide sequence ID" value="NM_001046192.2"/>
</dbReference>
<dbReference type="PDB" id="3JD5">
    <property type="method" value="EM"/>
    <property type="resolution" value="7.00 A"/>
    <property type="chains" value="b=1-190"/>
</dbReference>
<dbReference type="PDB" id="6NEQ">
    <property type="method" value="EM"/>
    <property type="resolution" value="3.32 A"/>
    <property type="chains" value="b=1-190"/>
</dbReference>
<dbReference type="PDB" id="6NF8">
    <property type="method" value="EM"/>
    <property type="resolution" value="3.48 A"/>
    <property type="chains" value="b=1-190"/>
</dbReference>
<dbReference type="PDBsum" id="3JD5"/>
<dbReference type="PDBsum" id="6NEQ"/>
<dbReference type="PDBsum" id="6NF8"/>
<dbReference type="EMDB" id="EMD-9358"/>
<dbReference type="EMDB" id="EMD-9362"/>
<dbReference type="SMR" id="Q2NL27"/>
<dbReference type="CORUM" id="Q2NL27"/>
<dbReference type="FunCoup" id="Q2NL27">
    <property type="interactions" value="1527"/>
</dbReference>
<dbReference type="IntAct" id="Q2NL27">
    <property type="interactions" value="1"/>
</dbReference>
<dbReference type="STRING" id="9913.ENSBTAP00000069834"/>
<dbReference type="iPTMnet" id="Q2NL27"/>
<dbReference type="PaxDb" id="9913-ENSBTAP00000016409"/>
<dbReference type="GeneID" id="515228"/>
<dbReference type="KEGG" id="bta:515228"/>
<dbReference type="CTD" id="51649"/>
<dbReference type="eggNOG" id="ENOG502RZIC">
    <property type="taxonomic scope" value="Eukaryota"/>
</dbReference>
<dbReference type="InParanoid" id="Q2NL27"/>
<dbReference type="OrthoDB" id="10012356at2759"/>
<dbReference type="Proteomes" id="UP000009136">
    <property type="component" value="Unplaced"/>
</dbReference>
<dbReference type="GO" id="GO:0005743">
    <property type="term" value="C:mitochondrial inner membrane"/>
    <property type="evidence" value="ECO:0000304"/>
    <property type="project" value="Reactome"/>
</dbReference>
<dbReference type="GO" id="GO:0005763">
    <property type="term" value="C:mitochondrial small ribosomal subunit"/>
    <property type="evidence" value="ECO:0000314"/>
    <property type="project" value="UniProtKB"/>
</dbReference>
<dbReference type="GO" id="GO:0005739">
    <property type="term" value="C:mitochondrion"/>
    <property type="evidence" value="ECO:0000318"/>
    <property type="project" value="GO_Central"/>
</dbReference>
<dbReference type="GO" id="GO:0003735">
    <property type="term" value="F:structural constituent of ribosome"/>
    <property type="evidence" value="ECO:0007005"/>
    <property type="project" value="UniProtKB"/>
</dbReference>
<dbReference type="GO" id="GO:0032543">
    <property type="term" value="P:mitochondrial translation"/>
    <property type="evidence" value="ECO:0007005"/>
    <property type="project" value="UniProtKB"/>
</dbReference>
<dbReference type="CDD" id="cd23701">
    <property type="entry name" value="At1g26750"/>
    <property type="match status" value="1"/>
</dbReference>
<dbReference type="InterPro" id="IPR023611">
    <property type="entry name" value="Ribosomal_mS23_dom"/>
</dbReference>
<dbReference type="InterPro" id="IPR019520">
    <property type="entry name" value="Ribosomal_mS23_met"/>
</dbReference>
<dbReference type="PANTHER" id="PTHR15925">
    <property type="entry name" value="MITOCHONDRIAL RIBOSOMAL PROTEIN S23"/>
    <property type="match status" value="1"/>
</dbReference>
<dbReference type="PANTHER" id="PTHR15925:SF2">
    <property type="entry name" value="SMALL RIBOSOMAL SUBUNIT PROTEIN MS23"/>
    <property type="match status" value="1"/>
</dbReference>
<dbReference type="Pfam" id="PF10484">
    <property type="entry name" value="MRP-S23"/>
    <property type="match status" value="1"/>
</dbReference>
<accession>Q2NL27</accession>
<accession>P82666</accession>
<organism>
    <name type="scientific">Bos taurus</name>
    <name type="common">Bovine</name>
    <dbReference type="NCBI Taxonomy" id="9913"/>
    <lineage>
        <taxon>Eukaryota</taxon>
        <taxon>Metazoa</taxon>
        <taxon>Chordata</taxon>
        <taxon>Craniata</taxon>
        <taxon>Vertebrata</taxon>
        <taxon>Euteleostomi</taxon>
        <taxon>Mammalia</taxon>
        <taxon>Eutheria</taxon>
        <taxon>Laurasiatheria</taxon>
        <taxon>Artiodactyla</taxon>
        <taxon>Ruminantia</taxon>
        <taxon>Pecora</taxon>
        <taxon>Bovidae</taxon>
        <taxon>Bovinae</taxon>
        <taxon>Bos</taxon>
    </lineage>
</organism>
<comment type="subunit">
    <text evidence="4 5">Component of the mitochondrial ribosome small subunit (28S) which comprises a 12S rRNA and about 30 distinct proteins.</text>
</comment>
<comment type="subcellular location">
    <subcellularLocation>
        <location evidence="4 5">Mitochondrion</location>
    </subcellularLocation>
</comment>
<comment type="similarity">
    <text evidence="6">Belongs to the mitochondrion-specific ribosomal protein mS23 family.</text>
</comment>
<gene>
    <name evidence="7" type="primary">MRPS23</name>
</gene>
<name>RT23_BOVIN</name>
<sequence length="190" mass="21594">MAGSRLETVGSIFTRTRDLIRAGVLKEKPLWFDVYNAFPPLREPVFRRPRLRYGKAKSPTQDIYYHEDQIRAKFYAAYGSGPKAFDLFNPNFKSTCQRFVEKYIELQKLGETDEEKLFVEAGKALLAEGVILRRVEKARTQQEGSQVSRKSESMGVESQTALEENPPLKEVPQAQHLESPGEESKGLSPP</sequence>